<proteinExistence type="evidence at protein level"/>
<keyword id="KW-0002">3D-structure</keyword>
<keyword id="KW-0067">ATP-binding</keyword>
<keyword id="KW-0112">Calmodulin-binding</keyword>
<keyword id="KW-0963">Cytoplasm</keyword>
<keyword id="KW-0418">Kinase</keyword>
<keyword id="KW-0547">Nucleotide-binding</keyword>
<keyword id="KW-0539">Nucleus</keyword>
<keyword id="KW-0597">Phosphoprotein</keyword>
<keyword id="KW-1267">Proteomics identification</keyword>
<keyword id="KW-1185">Reference proteome</keyword>
<keyword id="KW-0808">Transferase</keyword>
<reference key="1">
    <citation type="journal article" date="2000" name="Biochem. J.">
        <title>Cloning and expression of a cDNA encoding human inositol 1,4,5-trisphosphate 3-kinase C.</title>
        <authorList>
            <person name="Dewaste V."/>
            <person name="Pouillon V."/>
            <person name="Moreau C."/>
            <person name="Shears S."/>
            <person name="Takazawa K."/>
            <person name="Erneux C."/>
        </authorList>
    </citation>
    <scope>NUCLEOTIDE SEQUENCE [MRNA]</scope>
    <scope>ACTIVITY REGULATION</scope>
    <scope>TISSUE SPECIFICITY</scope>
    <scope>CATALYTIC ACTIVITY</scope>
    <scope>FUNCTION</scope>
    <source>
        <tissue>Thyroid</tissue>
    </source>
</reference>
<reference key="2">
    <citation type="journal article" date="2004" name="Genome Res.">
        <title>The status, quality, and expansion of the NIH full-length cDNA project: the Mammalian Gene Collection (MGC).</title>
        <authorList>
            <consortium name="The MGC Project Team"/>
        </authorList>
    </citation>
    <scope>NUCLEOTIDE SEQUENCE [LARGE SCALE MRNA]</scope>
    <source>
        <tissue>Placenta</tissue>
    </source>
</reference>
<reference key="3">
    <citation type="submission" date="1994-09" db="EMBL/GenBank/DDBJ databases">
        <authorList>
            <person name="Takazawa K."/>
            <person name="Go M."/>
            <person name="Togashi S."/>
            <person name="Endo T."/>
            <person name="Erneux C."/>
            <person name="Onaya T."/>
        </authorList>
    </citation>
    <scope>NUCLEOTIDE SEQUENCE [MRNA] OF 80-683</scope>
    <source>
        <tissue>Thyroid</tissue>
    </source>
</reference>
<reference key="4">
    <citation type="submission" date="1997-03" db="EMBL/GenBank/DDBJ databases">
        <authorList>
            <person name="Erneux C."/>
            <person name="Communi D."/>
        </authorList>
    </citation>
    <scope>NUCLEOTIDE SEQUENCE [MRNA] OF 531-667</scope>
    <source>
        <tissue>Placenta</tissue>
    </source>
</reference>
<reference key="5">
    <citation type="journal article" date="2003" name="Biochem. J.">
        <title>The three isoenzymes of human inositol-1,4,5-trisphosphate 3-kinase show specific intracellular localization but comparable Ca2+ responses on transfection in COS-7 cells.</title>
        <authorList>
            <person name="Dewaste V."/>
            <person name="Moreau C."/>
            <person name="De Smedt F."/>
            <person name="Bex F."/>
            <person name="De Smedt H."/>
            <person name="Wuytack F."/>
            <person name="Missiaen L."/>
            <person name="Erneux C."/>
        </authorList>
    </citation>
    <scope>SUBCELLULAR LOCATION</scope>
    <scope>ACTIVITY REGULATION</scope>
    <scope>FUNCTION</scope>
    <scope>MUTAGENESIS OF LYS-486</scope>
    <scope>CATALYTIC ACTIVITY</scope>
</reference>
<reference key="6">
    <citation type="journal article" date="2013" name="J. Proteome Res.">
        <title>Toward a comprehensive characterization of a human cancer cell phosphoproteome.</title>
        <authorList>
            <person name="Zhou H."/>
            <person name="Di Palma S."/>
            <person name="Preisinger C."/>
            <person name="Peng M."/>
            <person name="Polat A.N."/>
            <person name="Heck A.J."/>
            <person name="Mohammed S."/>
        </authorList>
    </citation>
    <scope>PHOSPHORYLATION [LARGE SCALE ANALYSIS] AT THR-336 AND SER-404</scope>
    <scope>IDENTIFICATION BY MASS SPECTROMETRY [LARGE SCALE ANALYSIS]</scope>
    <source>
        <tissue>Erythroleukemia</tissue>
    </source>
</reference>
<reference key="7">
    <citation type="journal article" date="2014" name="J. Proteomics">
        <title>An enzyme assisted RP-RPLC approach for in-depth analysis of human liver phosphoproteome.</title>
        <authorList>
            <person name="Bian Y."/>
            <person name="Song C."/>
            <person name="Cheng K."/>
            <person name="Dong M."/>
            <person name="Wang F."/>
            <person name="Huang J."/>
            <person name="Sun D."/>
            <person name="Wang L."/>
            <person name="Ye M."/>
            <person name="Zou H."/>
        </authorList>
    </citation>
    <scope>PHOSPHORYLATION [LARGE SCALE ANALYSIS] AT SER-127</scope>
    <scope>IDENTIFICATION BY MASS SPECTROMETRY [LARGE SCALE ANALYSIS]</scope>
    <source>
        <tissue>Liver</tissue>
    </source>
</reference>
<reference key="8">
    <citation type="submission" date="2005-10" db="PDB data bank">
        <title>The crystal structure of the catalytic domain of human inositol 1,4,5-trisphosphate 3-kinase C.</title>
        <authorList>
            <consortium name="Structural genomics consortium (SGC)"/>
        </authorList>
    </citation>
    <scope>X-RAY CRYSTALLOGRAPHY (2.6 ANGSTROMS) OF 425-683 IN COMPLEX WITH INOSITOL-1,4,5-TRIPHOSPHATE</scope>
</reference>
<evidence type="ECO:0000250" key="1"/>
<evidence type="ECO:0000250" key="2">
    <source>
        <dbReference type="UniProtKB" id="Q7TS72"/>
    </source>
</evidence>
<evidence type="ECO:0000250" key="3">
    <source>
        <dbReference type="UniProtKB" id="Q80ZG2"/>
    </source>
</evidence>
<evidence type="ECO:0000256" key="4">
    <source>
        <dbReference type="SAM" id="MobiDB-lite"/>
    </source>
</evidence>
<evidence type="ECO:0000269" key="5">
    <source>
    </source>
</evidence>
<evidence type="ECO:0000269" key="6">
    <source>
    </source>
</evidence>
<evidence type="ECO:0000305" key="7"/>
<evidence type="ECO:0000312" key="8">
    <source>
        <dbReference type="HGNC" id="HGNC:14897"/>
    </source>
</evidence>
<evidence type="ECO:0007744" key="9">
    <source>
    </source>
</evidence>
<evidence type="ECO:0007744" key="10">
    <source>
    </source>
</evidence>
<evidence type="ECO:0007829" key="11">
    <source>
        <dbReference type="PDB" id="2A98"/>
    </source>
</evidence>
<protein>
    <recommendedName>
        <fullName evidence="7">Inositol-trisphosphate 3-kinase C</fullName>
        <ecNumber evidence="5 6">2.7.1.127</ecNumber>
    </recommendedName>
    <alternativeName>
        <fullName>Inositol 1,4,5-trisphosphate 3-kinase C</fullName>
        <shortName>IP3 3-kinase C</shortName>
        <shortName>IP3K C</shortName>
        <shortName>InsP 3-kinase C</shortName>
    </alternativeName>
</protein>
<comment type="function">
    <text evidence="3 5 6">Catalyzes the phosphorylation of 1D-myo-inositol 1,4,5-trisphosphate (InsP3) into 1D-myo-inositol 1,3,4,5-tetrakisphosphate and participates to the regulation of calcium homeostasis (PubMed:11085927, PubMed:12747803). Can phosphorylate inositol 2,4,5-triphosphate to inositol 2,4,5,6-tetraphosphate (By similarity).</text>
</comment>
<comment type="catalytic activity">
    <reaction evidence="5 6">
        <text>1D-myo-inositol 1,4,5-trisphosphate + ATP = 1D-myo-inositol 1,3,4,5-tetrakisphosphate + ADP + H(+)</text>
        <dbReference type="Rhea" id="RHEA:11020"/>
        <dbReference type="ChEBI" id="CHEBI:15378"/>
        <dbReference type="ChEBI" id="CHEBI:30616"/>
        <dbReference type="ChEBI" id="CHEBI:57895"/>
        <dbReference type="ChEBI" id="CHEBI:203600"/>
        <dbReference type="ChEBI" id="CHEBI:456216"/>
        <dbReference type="EC" id="2.7.1.127"/>
    </reaction>
    <physiologicalReaction direction="left-to-right" evidence="5 6">
        <dbReference type="Rhea" id="RHEA:11021"/>
    </physiologicalReaction>
</comment>
<comment type="activity regulation">
    <text evidence="5 6">Activated by calcium/calmodulin (PubMed:12747803). Inhibited by high concentrations of the substrate Ins(1,2,4)P3, and allosterically activated by the product Ins(1,3,4,5)P4.</text>
</comment>
<comment type="subcellular location">
    <subcellularLocation>
        <location evidence="6">Nucleus</location>
    </subcellularLocation>
    <subcellularLocation>
        <location evidence="6">Cytoplasm</location>
    </subcellularLocation>
    <text evidence="3">Shuttles actively between nucleus and cytoplasm with both nuclear import and nuclear export activity.</text>
</comment>
<comment type="tissue specificity">
    <text evidence="5">Highly expressed in pancreas, skeletal muscle, liver, placenta and weakly in kidney and brain.</text>
</comment>
<comment type="similarity">
    <text evidence="7">Belongs to the inositol phosphokinase (IPK) family.</text>
</comment>
<dbReference type="EC" id="2.7.1.127" evidence="5 6"/>
<dbReference type="EMBL" id="AJ290975">
    <property type="protein sequence ID" value="CAC40815.1"/>
    <property type="molecule type" value="mRNA"/>
</dbReference>
<dbReference type="EMBL" id="BC060788">
    <property type="protein sequence ID" value="AAH60788.1"/>
    <property type="molecule type" value="mRNA"/>
</dbReference>
<dbReference type="EMBL" id="D38169">
    <property type="protein sequence ID" value="BAA22524.1"/>
    <property type="molecule type" value="mRNA"/>
</dbReference>
<dbReference type="EMBL" id="Y11999">
    <property type="protein sequence ID" value="CAA72728.1"/>
    <property type="molecule type" value="mRNA"/>
</dbReference>
<dbReference type="CCDS" id="CCDS12563.1"/>
<dbReference type="RefSeq" id="NP_079470.1">
    <property type="nucleotide sequence ID" value="NM_025194.3"/>
</dbReference>
<dbReference type="RefSeq" id="XP_047295422.1">
    <property type="nucleotide sequence ID" value="XM_047439466.1"/>
</dbReference>
<dbReference type="PDB" id="2A98">
    <property type="method" value="X-ray"/>
    <property type="resolution" value="2.60 A"/>
    <property type="chains" value="A=425-683"/>
</dbReference>
<dbReference type="PDBsum" id="2A98"/>
<dbReference type="SMR" id="Q96DU7"/>
<dbReference type="BioGRID" id="123209">
    <property type="interactions" value="18"/>
</dbReference>
<dbReference type="FunCoup" id="Q96DU7">
    <property type="interactions" value="2403"/>
</dbReference>
<dbReference type="IntAct" id="Q96DU7">
    <property type="interactions" value="14"/>
</dbReference>
<dbReference type="STRING" id="9606.ENSP00000263370"/>
<dbReference type="GuidetoPHARMACOLOGY" id="1449"/>
<dbReference type="GlyGen" id="Q96DU7">
    <property type="glycosylation" value="1 site"/>
</dbReference>
<dbReference type="iPTMnet" id="Q96DU7"/>
<dbReference type="PhosphoSitePlus" id="Q96DU7"/>
<dbReference type="BioMuta" id="ITPKC"/>
<dbReference type="jPOST" id="Q96DU7"/>
<dbReference type="MassIVE" id="Q96DU7"/>
<dbReference type="PaxDb" id="9606-ENSP00000263370"/>
<dbReference type="PeptideAtlas" id="Q96DU7"/>
<dbReference type="ProteomicsDB" id="76328"/>
<dbReference type="Pumba" id="Q96DU7"/>
<dbReference type="Antibodypedia" id="30626">
    <property type="antibodies" value="185 antibodies from 31 providers"/>
</dbReference>
<dbReference type="DNASU" id="80271"/>
<dbReference type="Ensembl" id="ENST00000263370.3">
    <property type="protein sequence ID" value="ENSP00000263370.1"/>
    <property type="gene ID" value="ENSG00000086544.4"/>
</dbReference>
<dbReference type="Ensembl" id="ENST00000699490.1">
    <property type="protein sequence ID" value="ENSP00000514401.1"/>
    <property type="gene ID" value="ENSG00000086544.4"/>
</dbReference>
<dbReference type="GeneID" id="80271"/>
<dbReference type="KEGG" id="hsa:80271"/>
<dbReference type="MANE-Select" id="ENST00000263370.3">
    <property type="protein sequence ID" value="ENSP00000263370.1"/>
    <property type="RefSeq nucleotide sequence ID" value="NM_025194.3"/>
    <property type="RefSeq protein sequence ID" value="NP_079470.1"/>
</dbReference>
<dbReference type="UCSC" id="uc002oot.5">
    <property type="organism name" value="human"/>
</dbReference>
<dbReference type="AGR" id="HGNC:14897"/>
<dbReference type="CTD" id="80271"/>
<dbReference type="DisGeNET" id="80271"/>
<dbReference type="GeneCards" id="ITPKC"/>
<dbReference type="HGNC" id="HGNC:14897">
    <property type="gene designation" value="ITPKC"/>
</dbReference>
<dbReference type="HPA" id="ENSG00000086544">
    <property type="expression patterns" value="Tissue enhanced (esophagus)"/>
</dbReference>
<dbReference type="MalaCards" id="ITPKC"/>
<dbReference type="MIM" id="606476">
    <property type="type" value="gene"/>
</dbReference>
<dbReference type="neXtProt" id="NX_Q96DU7"/>
<dbReference type="OpenTargets" id="ENSG00000086544"/>
<dbReference type="PharmGKB" id="PA29977"/>
<dbReference type="VEuPathDB" id="HostDB:ENSG00000086544"/>
<dbReference type="eggNOG" id="KOG1621">
    <property type="taxonomic scope" value="Eukaryota"/>
</dbReference>
<dbReference type="GeneTree" id="ENSGT00940000160033"/>
<dbReference type="HOGENOM" id="CLU_017767_5_0_1"/>
<dbReference type="InParanoid" id="Q96DU7"/>
<dbReference type="OMA" id="WADNLWT"/>
<dbReference type="OrthoDB" id="338650at2759"/>
<dbReference type="PAN-GO" id="Q96DU7">
    <property type="GO annotations" value="5 GO annotations based on evolutionary models"/>
</dbReference>
<dbReference type="PhylomeDB" id="Q96DU7"/>
<dbReference type="TreeFam" id="TF318394"/>
<dbReference type="BioCyc" id="MetaCyc:HS01533-MONOMER"/>
<dbReference type="BRENDA" id="2.7.1.127">
    <property type="organism ID" value="2681"/>
</dbReference>
<dbReference type="PathwayCommons" id="Q96DU7"/>
<dbReference type="Reactome" id="R-HSA-1855204">
    <property type="pathway name" value="Synthesis of IP3 and IP4 in the cytosol"/>
</dbReference>
<dbReference type="SignaLink" id="Q96DU7"/>
<dbReference type="BioGRID-ORCS" id="80271">
    <property type="hits" value="17 hits in 1169 CRISPR screens"/>
</dbReference>
<dbReference type="ChiTaRS" id="ITPKC">
    <property type="organism name" value="human"/>
</dbReference>
<dbReference type="EvolutionaryTrace" id="Q96DU7"/>
<dbReference type="GenomeRNAi" id="80271"/>
<dbReference type="Pharos" id="Q96DU7">
    <property type="development level" value="Tchem"/>
</dbReference>
<dbReference type="PRO" id="PR:Q96DU7"/>
<dbReference type="Proteomes" id="UP000005640">
    <property type="component" value="Chromosome 19"/>
</dbReference>
<dbReference type="RNAct" id="Q96DU7">
    <property type="molecule type" value="protein"/>
</dbReference>
<dbReference type="Bgee" id="ENSG00000086544">
    <property type="expression patterns" value="Expressed in lower esophagus mucosa and 170 other cell types or tissues"/>
</dbReference>
<dbReference type="ExpressionAtlas" id="Q96DU7">
    <property type="expression patterns" value="baseline and differential"/>
</dbReference>
<dbReference type="GO" id="GO:0005737">
    <property type="term" value="C:cytoplasm"/>
    <property type="evidence" value="ECO:0000314"/>
    <property type="project" value="UniProtKB"/>
</dbReference>
<dbReference type="GO" id="GO:0005829">
    <property type="term" value="C:cytosol"/>
    <property type="evidence" value="ECO:0000304"/>
    <property type="project" value="Reactome"/>
</dbReference>
<dbReference type="GO" id="GO:0016607">
    <property type="term" value="C:nuclear speck"/>
    <property type="evidence" value="ECO:0000314"/>
    <property type="project" value="HPA"/>
</dbReference>
<dbReference type="GO" id="GO:0005634">
    <property type="term" value="C:nucleus"/>
    <property type="evidence" value="ECO:0000314"/>
    <property type="project" value="UniProtKB"/>
</dbReference>
<dbReference type="GO" id="GO:0005524">
    <property type="term" value="F:ATP binding"/>
    <property type="evidence" value="ECO:0007669"/>
    <property type="project" value="UniProtKB-KW"/>
</dbReference>
<dbReference type="GO" id="GO:0005516">
    <property type="term" value="F:calmodulin binding"/>
    <property type="evidence" value="ECO:0007669"/>
    <property type="project" value="UniProtKB-KW"/>
</dbReference>
<dbReference type="GO" id="GO:0000828">
    <property type="term" value="F:inositol hexakisphosphate kinase activity"/>
    <property type="evidence" value="ECO:0000318"/>
    <property type="project" value="GO_Central"/>
</dbReference>
<dbReference type="GO" id="GO:0008440">
    <property type="term" value="F:inositol-1,4,5-trisphosphate 3-kinase activity"/>
    <property type="evidence" value="ECO:0000314"/>
    <property type="project" value="UniProtKB"/>
</dbReference>
<dbReference type="GO" id="GO:0071277">
    <property type="term" value="P:cellular response to calcium ion"/>
    <property type="evidence" value="ECO:0000314"/>
    <property type="project" value="UniProtKB"/>
</dbReference>
<dbReference type="GO" id="GO:0032958">
    <property type="term" value="P:inositol phosphate biosynthetic process"/>
    <property type="evidence" value="ECO:0000318"/>
    <property type="project" value="GO_Central"/>
</dbReference>
<dbReference type="GO" id="GO:0046854">
    <property type="term" value="P:phosphatidylinositol phosphate biosynthetic process"/>
    <property type="evidence" value="ECO:0000314"/>
    <property type="project" value="UniProtKB"/>
</dbReference>
<dbReference type="FunFam" id="3.30.470.160:FF:000001">
    <property type="entry name" value="Kinase"/>
    <property type="match status" value="1"/>
</dbReference>
<dbReference type="Gene3D" id="3.30.470.160">
    <property type="entry name" value="Inositol polyphosphate kinase"/>
    <property type="match status" value="1"/>
</dbReference>
<dbReference type="InterPro" id="IPR005522">
    <property type="entry name" value="IPK"/>
</dbReference>
<dbReference type="InterPro" id="IPR038286">
    <property type="entry name" value="IPK_sf"/>
</dbReference>
<dbReference type="PANTHER" id="PTHR12400">
    <property type="entry name" value="INOSITOL POLYPHOSPHATE KINASE"/>
    <property type="match status" value="1"/>
</dbReference>
<dbReference type="PANTHER" id="PTHR12400:SF106">
    <property type="entry name" value="INOSITOL-TRISPHOSPHATE 3-KINASE C"/>
    <property type="match status" value="1"/>
</dbReference>
<dbReference type="Pfam" id="PF03770">
    <property type="entry name" value="IPK"/>
    <property type="match status" value="1"/>
</dbReference>
<dbReference type="SUPFAM" id="SSF56104">
    <property type="entry name" value="SAICAR synthase-like"/>
    <property type="match status" value="1"/>
</dbReference>
<gene>
    <name evidence="8" type="primary">ITPKC</name>
    <name type="synonym">IP3KC</name>
</gene>
<feature type="chain" id="PRO_0000234070" description="Inositol-trisphosphate 3-kinase C">
    <location>
        <begin position="1"/>
        <end position="683"/>
    </location>
</feature>
<feature type="region of interest" description="Disordered" evidence="4">
    <location>
        <begin position="1"/>
        <end position="124"/>
    </location>
</feature>
<feature type="region of interest" description="Disordered" evidence="4">
    <location>
        <begin position="147"/>
        <end position="308"/>
    </location>
</feature>
<feature type="region of interest" description="Disordered" evidence="4">
    <location>
        <begin position="334"/>
        <end position="387"/>
    </location>
</feature>
<feature type="region of interest" description="Calmodulin-binding" evidence="1">
    <location>
        <begin position="509"/>
        <end position="517"/>
    </location>
</feature>
<feature type="short sequence motif" description="Nuclear export signal" evidence="1">
    <location>
        <begin position="324"/>
        <end position="332"/>
    </location>
</feature>
<feature type="compositionally biased region" description="Low complexity" evidence="4">
    <location>
        <begin position="13"/>
        <end position="22"/>
    </location>
</feature>
<feature type="compositionally biased region" description="Gly residues" evidence="4">
    <location>
        <begin position="44"/>
        <end position="58"/>
    </location>
</feature>
<feature type="compositionally biased region" description="Basic and acidic residues" evidence="4">
    <location>
        <begin position="105"/>
        <end position="124"/>
    </location>
</feature>
<feature type="compositionally biased region" description="Polar residues" evidence="4">
    <location>
        <begin position="196"/>
        <end position="206"/>
    </location>
</feature>
<feature type="compositionally biased region" description="Basic and acidic residues" evidence="4">
    <location>
        <begin position="249"/>
        <end position="259"/>
    </location>
</feature>
<feature type="compositionally biased region" description="Polar residues" evidence="4">
    <location>
        <begin position="267"/>
        <end position="289"/>
    </location>
</feature>
<feature type="compositionally biased region" description="Acidic residues" evidence="4">
    <location>
        <begin position="297"/>
        <end position="308"/>
    </location>
</feature>
<feature type="binding site" evidence="1">
    <location>
        <position position="431"/>
    </location>
    <ligand>
        <name>ATP</name>
        <dbReference type="ChEBI" id="CHEBI:30616"/>
    </ligand>
</feature>
<feature type="binding site" evidence="1">
    <location>
        <begin position="471"/>
        <end position="473"/>
    </location>
    <ligand>
        <name>ATP</name>
        <dbReference type="ChEBI" id="CHEBI:30616"/>
    </ligand>
</feature>
<feature type="binding site" evidence="1">
    <location>
        <position position="484"/>
    </location>
    <ligand>
        <name>ATP</name>
        <dbReference type="ChEBI" id="CHEBI:30616"/>
    </ligand>
</feature>
<feature type="binding site">
    <location>
        <position position="486"/>
    </location>
    <ligand>
        <name>substrate</name>
    </ligand>
</feature>
<feature type="binding site">
    <location>
        <begin position="507"/>
        <end position="513"/>
    </location>
    <ligand>
        <name>substrate</name>
    </ligand>
</feature>
<feature type="binding site">
    <location>
        <begin position="534"/>
        <end position="541"/>
    </location>
    <ligand>
        <name>substrate</name>
    </ligand>
</feature>
<feature type="binding site" evidence="1">
    <location>
        <position position="558"/>
    </location>
    <ligand>
        <name>ATP</name>
        <dbReference type="ChEBI" id="CHEBI:30616"/>
    </ligand>
</feature>
<feature type="binding site" evidence="1">
    <location>
        <position position="638"/>
    </location>
    <ligand>
        <name>ATP</name>
        <dbReference type="ChEBI" id="CHEBI:30616"/>
    </ligand>
</feature>
<feature type="binding site">
    <location>
        <position position="641"/>
    </location>
    <ligand>
        <name>substrate</name>
    </ligand>
</feature>
<feature type="modified residue" description="Phosphoserine" evidence="10">
    <location>
        <position position="127"/>
    </location>
</feature>
<feature type="modified residue" description="Phosphoserine" evidence="2">
    <location>
        <position position="162"/>
    </location>
</feature>
<feature type="modified residue" description="Phosphothreonine" evidence="9">
    <location>
        <position position="336"/>
    </location>
</feature>
<feature type="modified residue" description="Phosphoserine" evidence="9">
    <location>
        <position position="404"/>
    </location>
</feature>
<feature type="mutagenesis site" description="Loss of kinase activity." evidence="6">
    <original>K</original>
    <variation>A</variation>
    <location>
        <position position="486"/>
    </location>
</feature>
<feature type="sequence conflict" description="In Ref. 3; BAA22524." evidence="7" ref="3">
    <original>PGT</original>
    <variation>NSA</variation>
    <location>
        <begin position="80"/>
        <end position="82"/>
    </location>
</feature>
<feature type="strand" evidence="11">
    <location>
        <begin position="427"/>
        <end position="432"/>
    </location>
</feature>
<feature type="helix" evidence="11">
    <location>
        <begin position="435"/>
        <end position="444"/>
    </location>
</feature>
<feature type="helix" evidence="11">
    <location>
        <begin position="450"/>
        <end position="452"/>
    </location>
</feature>
<feature type="strand" evidence="11">
    <location>
        <begin position="456"/>
        <end position="462"/>
    </location>
</feature>
<feature type="strand" evidence="11">
    <location>
        <begin position="465"/>
        <end position="471"/>
    </location>
</feature>
<feature type="turn" evidence="11">
    <location>
        <begin position="473"/>
        <end position="476"/>
    </location>
</feature>
<feature type="strand" evidence="11">
    <location>
        <begin position="481"/>
        <end position="489"/>
    </location>
</feature>
<feature type="helix" evidence="11">
    <location>
        <begin position="494"/>
        <end position="496"/>
    </location>
</feature>
<feature type="turn" evidence="11">
    <location>
        <begin position="500"/>
        <end position="502"/>
    </location>
</feature>
<feature type="helix" evidence="11">
    <location>
        <begin position="508"/>
        <end position="515"/>
    </location>
</feature>
<feature type="helix" evidence="11">
    <location>
        <begin position="524"/>
        <end position="529"/>
    </location>
</feature>
<feature type="helix" evidence="11">
    <location>
        <begin position="534"/>
        <end position="544"/>
    </location>
</feature>
<feature type="helix" evidence="11">
    <location>
        <begin position="547"/>
        <end position="550"/>
    </location>
</feature>
<feature type="strand" evidence="11">
    <location>
        <begin position="551"/>
        <end position="558"/>
    </location>
</feature>
<feature type="helix" evidence="11">
    <location>
        <begin position="574"/>
        <end position="585"/>
    </location>
</feature>
<feature type="helix" evidence="11">
    <location>
        <begin position="589"/>
        <end position="608"/>
    </location>
</feature>
<feature type="helix" evidence="11">
    <location>
        <begin position="610"/>
        <end position="613"/>
    </location>
</feature>
<feature type="strand" evidence="11">
    <location>
        <begin position="615"/>
        <end position="617"/>
    </location>
</feature>
<feature type="strand" evidence="11">
    <location>
        <begin position="621"/>
        <end position="626"/>
    </location>
</feature>
<feature type="strand" evidence="11">
    <location>
        <begin position="632"/>
        <end position="637"/>
    </location>
</feature>
<feature type="strand" evidence="11">
    <location>
        <begin position="642"/>
        <end position="644"/>
    </location>
</feature>
<feature type="strand" evidence="11">
    <location>
        <begin position="653"/>
        <end position="655"/>
    </location>
</feature>
<feature type="turn" evidence="11">
    <location>
        <begin position="659"/>
        <end position="661"/>
    </location>
</feature>
<feature type="helix" evidence="11">
    <location>
        <begin position="666"/>
        <end position="681"/>
    </location>
</feature>
<sequence length="683" mass="75207">MRRCPCRGSLNEAEAGALPAAARMGLEAPRGGRRRQPGQQRPGPGAGAPAGRPEGGGPWARTEGSSLHSEPERAGLGPAPGTESPQAEFWTDGQTEPAAAGLGVETERPKQKTEPDRSSLRTHLEWSWSELETTCLWTETGTDGLWTDPHRSDLQFQPEEASPWTQPGVHGPWTELETHGSQTQPERVKSWADNLWTHQNSSSLQTHPEGACPSKEPSADGSWKELYTDGSRTQQDIEGPWTEPYTDGSQKKQDTEAARKQPGTGGFQIQQDTDGSWTQPSTDGSQTAPGTDCLLGEPEDGPLEEPEPGELLTHLYSHLKCSPLCPVPRLIITPETPEPEAQPVGPPSRVEGGSGGFSSASSFDESEDDVVAGGGGASDPEDRSGSKPWKKLKTVLKYSPFVVSFRKHYPWVQLSGHAGNFQAGEDGRILKRFCQCEQRSLEQLMKDPLRPFVPAYYGMVLQDGQTFNQMEDLLADFEGPSIMDCKMGSRTYLEEELVKARERPRPRKDMYEKMVAVDPGAPTPEEHAQGAVTKPRYMQWRETMSSTSTLGFRIEGIKKADGTCNTNFKKTQALEQVTKVLEDFVDGDHVILQKYVACLEELREALEISPFFKTHEVVGSSLLFVHDHTGLAKVWMIDFGKTVALPDHQTLSHRLPWAEGNREDGYLWGLDNMICLLQGLAQS</sequence>
<organism>
    <name type="scientific">Homo sapiens</name>
    <name type="common">Human</name>
    <dbReference type="NCBI Taxonomy" id="9606"/>
    <lineage>
        <taxon>Eukaryota</taxon>
        <taxon>Metazoa</taxon>
        <taxon>Chordata</taxon>
        <taxon>Craniata</taxon>
        <taxon>Vertebrata</taxon>
        <taxon>Euteleostomi</taxon>
        <taxon>Mammalia</taxon>
        <taxon>Eutheria</taxon>
        <taxon>Euarchontoglires</taxon>
        <taxon>Primates</taxon>
        <taxon>Haplorrhini</taxon>
        <taxon>Catarrhini</taxon>
        <taxon>Hominidae</taxon>
        <taxon>Homo</taxon>
    </lineage>
</organism>
<accession>Q96DU7</accession>
<accession>Q9UE25</accession>
<accession>Q9Y475</accession>
<name>IP3KC_HUMAN</name>